<accession>Q6D547</accession>
<keyword id="KW-0963">Cytoplasm</keyword>
<keyword id="KW-0448">Lipopolysaccharide biosynthesis</keyword>
<keyword id="KW-1185">Reference proteome</keyword>
<keyword id="KW-0808">Transferase</keyword>
<sequence length="284" mass="30781">MTNKVVKIGDIPVANDLPFVLFGGMNVLESRDLAMRICEHYVTVTQKLGIPYVFKASFDKANRSSIHSYRGPGLEEGMKIFQELKQTFGVKIITDVHDSHQAQPVADVVDVIQLPAFLARQTDLVEAMAKTGAVINVKKPQFVSPGQMGNIVDKFIEGGNDQIILCDRGSNFGYDNLVVDMLGFNVMKHASNGSPVIFDVTHALQCRDPFGAASGGRRGQVTELARAGMAVGLAGLFIEAHPDPANAKCDGPSALPLDKLEPFLQQIKAIDDLVKSFPELDTSN</sequence>
<reference key="1">
    <citation type="journal article" date="2004" name="Proc. Natl. Acad. Sci. U.S.A.">
        <title>Genome sequence of the enterobacterial phytopathogen Erwinia carotovora subsp. atroseptica and characterization of virulence factors.</title>
        <authorList>
            <person name="Bell K.S."/>
            <person name="Sebaihia M."/>
            <person name="Pritchard L."/>
            <person name="Holden M.T.G."/>
            <person name="Hyman L.J."/>
            <person name="Holeva M.C."/>
            <person name="Thomson N.R."/>
            <person name="Bentley S.D."/>
            <person name="Churcher L.J.C."/>
            <person name="Mungall K."/>
            <person name="Atkin R."/>
            <person name="Bason N."/>
            <person name="Brooks K."/>
            <person name="Chillingworth T."/>
            <person name="Clark K."/>
            <person name="Doggett J."/>
            <person name="Fraser A."/>
            <person name="Hance Z."/>
            <person name="Hauser H."/>
            <person name="Jagels K."/>
            <person name="Moule S."/>
            <person name="Norbertczak H."/>
            <person name="Ormond D."/>
            <person name="Price C."/>
            <person name="Quail M.A."/>
            <person name="Sanders M."/>
            <person name="Walker D."/>
            <person name="Whitehead S."/>
            <person name="Salmond G.P.C."/>
            <person name="Birch P.R.J."/>
            <person name="Parkhill J."/>
            <person name="Toth I.K."/>
        </authorList>
    </citation>
    <scope>NUCLEOTIDE SEQUENCE [LARGE SCALE GENOMIC DNA]</scope>
    <source>
        <strain>SCRI 1043 / ATCC BAA-672</strain>
    </source>
</reference>
<feature type="chain" id="PRO_0000187127" description="2-dehydro-3-deoxyphosphooctonate aldolase">
    <location>
        <begin position="1"/>
        <end position="284"/>
    </location>
</feature>
<evidence type="ECO:0000255" key="1">
    <source>
        <dbReference type="HAMAP-Rule" id="MF_00056"/>
    </source>
</evidence>
<gene>
    <name evidence="1" type="primary">kdsA</name>
    <name type="ordered locus">ECA2194</name>
</gene>
<name>KDSA_PECAS</name>
<dbReference type="EC" id="2.5.1.55" evidence="1"/>
<dbReference type="EMBL" id="BX950851">
    <property type="protein sequence ID" value="CAG75096.1"/>
    <property type="molecule type" value="Genomic_DNA"/>
</dbReference>
<dbReference type="RefSeq" id="WP_011093753.1">
    <property type="nucleotide sequence ID" value="NC_004547.2"/>
</dbReference>
<dbReference type="SMR" id="Q6D547"/>
<dbReference type="STRING" id="218491.ECA2194"/>
<dbReference type="GeneID" id="57209084"/>
<dbReference type="KEGG" id="eca:ECA2194"/>
<dbReference type="PATRIC" id="fig|218491.5.peg.2228"/>
<dbReference type="eggNOG" id="COG2877">
    <property type="taxonomic scope" value="Bacteria"/>
</dbReference>
<dbReference type="HOGENOM" id="CLU_036666_0_0_6"/>
<dbReference type="OrthoDB" id="9776934at2"/>
<dbReference type="UniPathway" id="UPA00030"/>
<dbReference type="UniPathway" id="UPA00357">
    <property type="reaction ID" value="UER00474"/>
</dbReference>
<dbReference type="Proteomes" id="UP000007966">
    <property type="component" value="Chromosome"/>
</dbReference>
<dbReference type="GO" id="GO:0005737">
    <property type="term" value="C:cytoplasm"/>
    <property type="evidence" value="ECO:0007669"/>
    <property type="project" value="UniProtKB-SubCell"/>
</dbReference>
<dbReference type="GO" id="GO:0008676">
    <property type="term" value="F:3-deoxy-8-phosphooctulonate synthase activity"/>
    <property type="evidence" value="ECO:0007669"/>
    <property type="project" value="UniProtKB-UniRule"/>
</dbReference>
<dbReference type="GO" id="GO:0019294">
    <property type="term" value="P:keto-3-deoxy-D-manno-octulosonic acid biosynthetic process"/>
    <property type="evidence" value="ECO:0007669"/>
    <property type="project" value="UniProtKB-UniRule"/>
</dbReference>
<dbReference type="FunFam" id="3.20.20.70:FF:000058">
    <property type="entry name" value="2-dehydro-3-deoxyphosphooctonate aldolase"/>
    <property type="match status" value="1"/>
</dbReference>
<dbReference type="Gene3D" id="3.20.20.70">
    <property type="entry name" value="Aldolase class I"/>
    <property type="match status" value="1"/>
</dbReference>
<dbReference type="HAMAP" id="MF_00056">
    <property type="entry name" value="KDO8P_synth"/>
    <property type="match status" value="1"/>
</dbReference>
<dbReference type="InterPro" id="IPR013785">
    <property type="entry name" value="Aldolase_TIM"/>
</dbReference>
<dbReference type="InterPro" id="IPR006218">
    <property type="entry name" value="DAHP1/KDSA"/>
</dbReference>
<dbReference type="InterPro" id="IPR006269">
    <property type="entry name" value="KDO8P_synthase"/>
</dbReference>
<dbReference type="NCBIfam" id="TIGR01362">
    <property type="entry name" value="KDO8P_synth"/>
    <property type="match status" value="1"/>
</dbReference>
<dbReference type="NCBIfam" id="NF003543">
    <property type="entry name" value="PRK05198.1"/>
    <property type="match status" value="1"/>
</dbReference>
<dbReference type="NCBIfam" id="NF009109">
    <property type="entry name" value="PRK12457.1"/>
    <property type="match status" value="1"/>
</dbReference>
<dbReference type="PANTHER" id="PTHR21057">
    <property type="entry name" value="PHOSPHO-2-DEHYDRO-3-DEOXYHEPTONATE ALDOLASE"/>
    <property type="match status" value="1"/>
</dbReference>
<dbReference type="Pfam" id="PF00793">
    <property type="entry name" value="DAHP_synth_1"/>
    <property type="match status" value="1"/>
</dbReference>
<dbReference type="SUPFAM" id="SSF51569">
    <property type="entry name" value="Aldolase"/>
    <property type="match status" value="1"/>
</dbReference>
<organism>
    <name type="scientific">Pectobacterium atrosepticum (strain SCRI 1043 / ATCC BAA-672)</name>
    <name type="common">Erwinia carotovora subsp. atroseptica</name>
    <dbReference type="NCBI Taxonomy" id="218491"/>
    <lineage>
        <taxon>Bacteria</taxon>
        <taxon>Pseudomonadati</taxon>
        <taxon>Pseudomonadota</taxon>
        <taxon>Gammaproteobacteria</taxon>
        <taxon>Enterobacterales</taxon>
        <taxon>Pectobacteriaceae</taxon>
        <taxon>Pectobacterium</taxon>
    </lineage>
</organism>
<proteinExistence type="inferred from homology"/>
<comment type="catalytic activity">
    <reaction evidence="1">
        <text>D-arabinose 5-phosphate + phosphoenolpyruvate + H2O = 3-deoxy-alpha-D-manno-2-octulosonate-8-phosphate + phosphate</text>
        <dbReference type="Rhea" id="RHEA:14053"/>
        <dbReference type="ChEBI" id="CHEBI:15377"/>
        <dbReference type="ChEBI" id="CHEBI:43474"/>
        <dbReference type="ChEBI" id="CHEBI:57693"/>
        <dbReference type="ChEBI" id="CHEBI:58702"/>
        <dbReference type="ChEBI" id="CHEBI:85985"/>
        <dbReference type="EC" id="2.5.1.55"/>
    </reaction>
</comment>
<comment type="pathway">
    <text evidence="1">Carbohydrate biosynthesis; 3-deoxy-D-manno-octulosonate biosynthesis; 3-deoxy-D-manno-octulosonate from D-ribulose 5-phosphate: step 2/3.</text>
</comment>
<comment type="pathway">
    <text evidence="1">Bacterial outer membrane biogenesis; lipopolysaccharide biosynthesis.</text>
</comment>
<comment type="subcellular location">
    <subcellularLocation>
        <location evidence="1">Cytoplasm</location>
    </subcellularLocation>
</comment>
<comment type="similarity">
    <text evidence="1">Belongs to the KdsA family.</text>
</comment>
<protein>
    <recommendedName>
        <fullName evidence="1">2-dehydro-3-deoxyphosphooctonate aldolase</fullName>
        <ecNumber evidence="1">2.5.1.55</ecNumber>
    </recommendedName>
    <alternativeName>
        <fullName evidence="1">3-deoxy-D-manno-octulosonic acid 8-phosphate synthase</fullName>
    </alternativeName>
    <alternativeName>
        <fullName evidence="1">KDO-8-phosphate synthase</fullName>
        <shortName evidence="1">KDO 8-P synthase</shortName>
        <shortName evidence="1">KDOPS</shortName>
    </alternativeName>
    <alternativeName>
        <fullName evidence="1">Phospho-2-dehydro-3-deoxyoctonate aldolase</fullName>
    </alternativeName>
</protein>